<organism>
    <name type="scientific">Geotalea uraniireducens (strain Rf4)</name>
    <name type="common">Geobacter uraniireducens</name>
    <dbReference type="NCBI Taxonomy" id="351605"/>
    <lineage>
        <taxon>Bacteria</taxon>
        <taxon>Pseudomonadati</taxon>
        <taxon>Thermodesulfobacteriota</taxon>
        <taxon>Desulfuromonadia</taxon>
        <taxon>Geobacterales</taxon>
        <taxon>Geobacteraceae</taxon>
        <taxon>Geotalea</taxon>
    </lineage>
</organism>
<protein>
    <recommendedName>
        <fullName evidence="1">Orotidine 5'-phosphate decarboxylase</fullName>
        <ecNumber evidence="1">4.1.1.23</ecNumber>
    </recommendedName>
    <alternativeName>
        <fullName evidence="1">OMP decarboxylase</fullName>
        <shortName evidence="1">OMPDCase</shortName>
        <shortName evidence="1">OMPdecase</shortName>
    </alternativeName>
</protein>
<comment type="function">
    <text evidence="1">Catalyzes the decarboxylation of orotidine 5'-monophosphate (OMP) to uridine 5'-monophosphate (UMP).</text>
</comment>
<comment type="catalytic activity">
    <reaction evidence="1">
        <text>orotidine 5'-phosphate + H(+) = UMP + CO2</text>
        <dbReference type="Rhea" id="RHEA:11596"/>
        <dbReference type="ChEBI" id="CHEBI:15378"/>
        <dbReference type="ChEBI" id="CHEBI:16526"/>
        <dbReference type="ChEBI" id="CHEBI:57538"/>
        <dbReference type="ChEBI" id="CHEBI:57865"/>
        <dbReference type="EC" id="4.1.1.23"/>
    </reaction>
</comment>
<comment type="pathway">
    <text evidence="1">Pyrimidine metabolism; UMP biosynthesis via de novo pathway; UMP from orotate: step 2/2.</text>
</comment>
<comment type="subunit">
    <text evidence="1">Homodimer.</text>
</comment>
<comment type="similarity">
    <text evidence="1">Belongs to the OMP decarboxylase family. Type 1 subfamily.</text>
</comment>
<keyword id="KW-0210">Decarboxylase</keyword>
<keyword id="KW-0456">Lyase</keyword>
<keyword id="KW-0665">Pyrimidine biosynthesis</keyword>
<keyword id="KW-1185">Reference proteome</keyword>
<accession>A5G5A2</accession>
<sequence>MTRDEARAKVIFALDVHEFSDVEQWADMLAPHVGMFKVGKQLFTSCGPAAVRMIQKCGGEVFLDLKYHDIPNTVAMASLEAARMGVKLFNLHALGGYEMMAKTVETLDKEFKGGERGKVLAVTILTSSNEQTLQDVGINIPVPEMVVKLALLARKAGIDGVVASPQEVPLIRKACGKDFLIVTPGVRPAFASSDDQKRIMTPAEAVRTGADYLVIGRPIAAAPKPVEAAEAIIDEIMAVEG</sequence>
<gene>
    <name evidence="1" type="primary">pyrF</name>
    <name type="ordered locus">Gura_2797</name>
</gene>
<name>PYRF_GEOUR</name>
<proteinExistence type="inferred from homology"/>
<dbReference type="EC" id="4.1.1.23" evidence="1"/>
<dbReference type="EMBL" id="CP000698">
    <property type="protein sequence ID" value="ABQ26970.1"/>
    <property type="molecule type" value="Genomic_DNA"/>
</dbReference>
<dbReference type="RefSeq" id="WP_011939645.1">
    <property type="nucleotide sequence ID" value="NC_009483.1"/>
</dbReference>
<dbReference type="SMR" id="A5G5A2"/>
<dbReference type="STRING" id="351605.Gura_2797"/>
<dbReference type="KEGG" id="gur:Gura_2797"/>
<dbReference type="HOGENOM" id="CLU_067069_0_0_7"/>
<dbReference type="OrthoDB" id="9806203at2"/>
<dbReference type="UniPathway" id="UPA00070">
    <property type="reaction ID" value="UER00120"/>
</dbReference>
<dbReference type="Proteomes" id="UP000006695">
    <property type="component" value="Chromosome"/>
</dbReference>
<dbReference type="GO" id="GO:0005829">
    <property type="term" value="C:cytosol"/>
    <property type="evidence" value="ECO:0007669"/>
    <property type="project" value="TreeGrafter"/>
</dbReference>
<dbReference type="GO" id="GO:0004590">
    <property type="term" value="F:orotidine-5'-phosphate decarboxylase activity"/>
    <property type="evidence" value="ECO:0007669"/>
    <property type="project" value="UniProtKB-UniRule"/>
</dbReference>
<dbReference type="GO" id="GO:0006207">
    <property type="term" value="P:'de novo' pyrimidine nucleobase biosynthetic process"/>
    <property type="evidence" value="ECO:0007669"/>
    <property type="project" value="InterPro"/>
</dbReference>
<dbReference type="GO" id="GO:0044205">
    <property type="term" value="P:'de novo' UMP biosynthetic process"/>
    <property type="evidence" value="ECO:0007669"/>
    <property type="project" value="UniProtKB-UniRule"/>
</dbReference>
<dbReference type="CDD" id="cd04725">
    <property type="entry name" value="OMP_decarboxylase_like"/>
    <property type="match status" value="1"/>
</dbReference>
<dbReference type="FunFam" id="3.20.20.70:FF:000015">
    <property type="entry name" value="Orotidine 5'-phosphate decarboxylase"/>
    <property type="match status" value="1"/>
</dbReference>
<dbReference type="Gene3D" id="3.20.20.70">
    <property type="entry name" value="Aldolase class I"/>
    <property type="match status" value="1"/>
</dbReference>
<dbReference type="HAMAP" id="MF_01200_B">
    <property type="entry name" value="OMPdecase_type1_B"/>
    <property type="match status" value="1"/>
</dbReference>
<dbReference type="InterPro" id="IPR013785">
    <property type="entry name" value="Aldolase_TIM"/>
</dbReference>
<dbReference type="InterPro" id="IPR014732">
    <property type="entry name" value="OMPdecase"/>
</dbReference>
<dbReference type="InterPro" id="IPR018089">
    <property type="entry name" value="OMPdecase_AS"/>
</dbReference>
<dbReference type="InterPro" id="IPR047596">
    <property type="entry name" value="OMPdecase_bac"/>
</dbReference>
<dbReference type="InterPro" id="IPR001754">
    <property type="entry name" value="OMPdeCOase_dom"/>
</dbReference>
<dbReference type="InterPro" id="IPR011060">
    <property type="entry name" value="RibuloseP-bd_barrel"/>
</dbReference>
<dbReference type="NCBIfam" id="NF001273">
    <property type="entry name" value="PRK00230.1"/>
    <property type="match status" value="1"/>
</dbReference>
<dbReference type="NCBIfam" id="TIGR01740">
    <property type="entry name" value="pyrF"/>
    <property type="match status" value="1"/>
</dbReference>
<dbReference type="PANTHER" id="PTHR32119">
    <property type="entry name" value="OROTIDINE 5'-PHOSPHATE DECARBOXYLASE"/>
    <property type="match status" value="1"/>
</dbReference>
<dbReference type="PANTHER" id="PTHR32119:SF2">
    <property type="entry name" value="OROTIDINE 5'-PHOSPHATE DECARBOXYLASE"/>
    <property type="match status" value="1"/>
</dbReference>
<dbReference type="Pfam" id="PF00215">
    <property type="entry name" value="OMPdecase"/>
    <property type="match status" value="1"/>
</dbReference>
<dbReference type="SMART" id="SM00934">
    <property type="entry name" value="OMPdecase"/>
    <property type="match status" value="1"/>
</dbReference>
<dbReference type="SUPFAM" id="SSF51366">
    <property type="entry name" value="Ribulose-phoshate binding barrel"/>
    <property type="match status" value="1"/>
</dbReference>
<dbReference type="PROSITE" id="PS00156">
    <property type="entry name" value="OMPDECASE"/>
    <property type="match status" value="1"/>
</dbReference>
<reference key="1">
    <citation type="submission" date="2007-05" db="EMBL/GenBank/DDBJ databases">
        <title>Complete sequence of Geobacter uraniireducens Rf4.</title>
        <authorList>
            <consortium name="US DOE Joint Genome Institute"/>
            <person name="Copeland A."/>
            <person name="Lucas S."/>
            <person name="Lapidus A."/>
            <person name="Barry K."/>
            <person name="Detter J.C."/>
            <person name="Glavina del Rio T."/>
            <person name="Hammon N."/>
            <person name="Israni S."/>
            <person name="Dalin E."/>
            <person name="Tice H."/>
            <person name="Pitluck S."/>
            <person name="Chertkov O."/>
            <person name="Brettin T."/>
            <person name="Bruce D."/>
            <person name="Han C."/>
            <person name="Schmutz J."/>
            <person name="Larimer F."/>
            <person name="Land M."/>
            <person name="Hauser L."/>
            <person name="Kyrpides N."/>
            <person name="Mikhailova N."/>
            <person name="Shelobolina E."/>
            <person name="Aklujkar M."/>
            <person name="Lovley D."/>
            <person name="Richardson P."/>
        </authorList>
    </citation>
    <scope>NUCLEOTIDE SEQUENCE [LARGE SCALE GENOMIC DNA]</scope>
    <source>
        <strain>ATCC BAA-1134 / JCM 13001 / Rf4</strain>
    </source>
</reference>
<feature type="chain" id="PRO_1000085491" description="Orotidine 5'-phosphate decarboxylase">
    <location>
        <begin position="1"/>
        <end position="241"/>
    </location>
</feature>
<feature type="active site" description="Proton donor" evidence="1">
    <location>
        <position position="66"/>
    </location>
</feature>
<feature type="binding site" evidence="1">
    <location>
        <position position="15"/>
    </location>
    <ligand>
        <name>substrate</name>
    </ligand>
</feature>
<feature type="binding site" evidence="1">
    <location>
        <position position="37"/>
    </location>
    <ligand>
        <name>substrate</name>
    </ligand>
</feature>
<feature type="binding site" evidence="1">
    <location>
        <begin position="64"/>
        <end position="73"/>
    </location>
    <ligand>
        <name>substrate</name>
    </ligand>
</feature>
<feature type="binding site" evidence="1">
    <location>
        <position position="126"/>
    </location>
    <ligand>
        <name>substrate</name>
    </ligand>
</feature>
<feature type="binding site" evidence="1">
    <location>
        <position position="187"/>
    </location>
    <ligand>
        <name>substrate</name>
    </ligand>
</feature>
<feature type="binding site" evidence="1">
    <location>
        <position position="196"/>
    </location>
    <ligand>
        <name>substrate</name>
    </ligand>
</feature>
<feature type="binding site" evidence="1">
    <location>
        <position position="216"/>
    </location>
    <ligand>
        <name>substrate</name>
    </ligand>
</feature>
<feature type="binding site" evidence="1">
    <location>
        <position position="217"/>
    </location>
    <ligand>
        <name>substrate</name>
    </ligand>
</feature>
<evidence type="ECO:0000255" key="1">
    <source>
        <dbReference type="HAMAP-Rule" id="MF_01200"/>
    </source>
</evidence>